<proteinExistence type="inferred from homology"/>
<sequence length="134" mass="14305">MGFIQEFKDFAMRGNVVDLAVGIIIGGAFGKVVTALVDGVLMPPIGLLIGGVNFDQLAFELRAATAESAAVSLNYGAFLQTIVDFVIIAFSIFVVIKALNSLKRKSEEAPKAPPVPSKEEVLLGEIRDLLKERG</sequence>
<gene>
    <name evidence="1" type="primary">mscL</name>
    <name type="ordered locus">Paes_1626</name>
</gene>
<evidence type="ECO:0000255" key="1">
    <source>
        <dbReference type="HAMAP-Rule" id="MF_00115"/>
    </source>
</evidence>
<accession>B4S9H4</accession>
<keyword id="KW-0997">Cell inner membrane</keyword>
<keyword id="KW-1003">Cell membrane</keyword>
<keyword id="KW-0407">Ion channel</keyword>
<keyword id="KW-0406">Ion transport</keyword>
<keyword id="KW-0472">Membrane</keyword>
<keyword id="KW-0812">Transmembrane</keyword>
<keyword id="KW-1133">Transmembrane helix</keyword>
<keyword id="KW-0813">Transport</keyword>
<organism>
    <name type="scientific">Prosthecochloris aestuarii (strain DSM 271 / SK 413)</name>
    <dbReference type="NCBI Taxonomy" id="290512"/>
    <lineage>
        <taxon>Bacteria</taxon>
        <taxon>Pseudomonadati</taxon>
        <taxon>Chlorobiota</taxon>
        <taxon>Chlorobiia</taxon>
        <taxon>Chlorobiales</taxon>
        <taxon>Chlorobiaceae</taxon>
        <taxon>Prosthecochloris</taxon>
    </lineage>
</organism>
<feature type="chain" id="PRO_1000094913" description="Large-conductance mechanosensitive channel">
    <location>
        <begin position="1"/>
        <end position="134"/>
    </location>
</feature>
<feature type="transmembrane region" description="Helical" evidence="1">
    <location>
        <begin position="10"/>
        <end position="30"/>
    </location>
</feature>
<feature type="transmembrane region" description="Helical" evidence="1">
    <location>
        <begin position="76"/>
        <end position="96"/>
    </location>
</feature>
<comment type="function">
    <text evidence="1">Channel that opens in response to stretch forces in the membrane lipid bilayer. May participate in the regulation of osmotic pressure changes within the cell.</text>
</comment>
<comment type="subunit">
    <text evidence="1">Homopentamer.</text>
</comment>
<comment type="subcellular location">
    <subcellularLocation>
        <location evidence="1">Cell inner membrane</location>
        <topology evidence="1">Multi-pass membrane protein</topology>
    </subcellularLocation>
</comment>
<comment type="similarity">
    <text evidence="1">Belongs to the MscL family.</text>
</comment>
<dbReference type="EMBL" id="CP001108">
    <property type="protein sequence ID" value="ACF46644.1"/>
    <property type="molecule type" value="Genomic_DNA"/>
</dbReference>
<dbReference type="RefSeq" id="WP_012506177.1">
    <property type="nucleotide sequence ID" value="NC_011059.1"/>
</dbReference>
<dbReference type="SMR" id="B4S9H4"/>
<dbReference type="STRING" id="290512.Paes_1626"/>
<dbReference type="KEGG" id="paa:Paes_1626"/>
<dbReference type="eggNOG" id="COG1970">
    <property type="taxonomic scope" value="Bacteria"/>
</dbReference>
<dbReference type="HOGENOM" id="CLU_095787_0_0_10"/>
<dbReference type="Proteomes" id="UP000002725">
    <property type="component" value="Chromosome"/>
</dbReference>
<dbReference type="GO" id="GO:0005886">
    <property type="term" value="C:plasma membrane"/>
    <property type="evidence" value="ECO:0007669"/>
    <property type="project" value="UniProtKB-SubCell"/>
</dbReference>
<dbReference type="GO" id="GO:0008381">
    <property type="term" value="F:mechanosensitive monoatomic ion channel activity"/>
    <property type="evidence" value="ECO:0007669"/>
    <property type="project" value="UniProtKB-UniRule"/>
</dbReference>
<dbReference type="FunFam" id="1.10.1200.120:FF:000001">
    <property type="entry name" value="Large-conductance mechanosensitive channel"/>
    <property type="match status" value="1"/>
</dbReference>
<dbReference type="Gene3D" id="1.10.1200.120">
    <property type="entry name" value="Large-conductance mechanosensitive channel, MscL, domain 1"/>
    <property type="match status" value="1"/>
</dbReference>
<dbReference type="HAMAP" id="MF_00115">
    <property type="entry name" value="MscL"/>
    <property type="match status" value="1"/>
</dbReference>
<dbReference type="InterPro" id="IPR019823">
    <property type="entry name" value="Mechanosensitive_channel_CS"/>
</dbReference>
<dbReference type="InterPro" id="IPR001185">
    <property type="entry name" value="MS_channel"/>
</dbReference>
<dbReference type="InterPro" id="IPR037673">
    <property type="entry name" value="MSC/AndL"/>
</dbReference>
<dbReference type="InterPro" id="IPR036019">
    <property type="entry name" value="MscL_channel"/>
</dbReference>
<dbReference type="NCBIfam" id="TIGR00220">
    <property type="entry name" value="mscL"/>
    <property type="match status" value="1"/>
</dbReference>
<dbReference type="NCBIfam" id="NF001843">
    <property type="entry name" value="PRK00567.1-4"/>
    <property type="match status" value="1"/>
</dbReference>
<dbReference type="PANTHER" id="PTHR30266:SF2">
    <property type="entry name" value="LARGE-CONDUCTANCE MECHANOSENSITIVE CHANNEL"/>
    <property type="match status" value="1"/>
</dbReference>
<dbReference type="PANTHER" id="PTHR30266">
    <property type="entry name" value="MECHANOSENSITIVE CHANNEL MSCL"/>
    <property type="match status" value="1"/>
</dbReference>
<dbReference type="Pfam" id="PF01741">
    <property type="entry name" value="MscL"/>
    <property type="match status" value="1"/>
</dbReference>
<dbReference type="PRINTS" id="PR01264">
    <property type="entry name" value="MECHCHANNEL"/>
</dbReference>
<dbReference type="SUPFAM" id="SSF81330">
    <property type="entry name" value="Gated mechanosensitive channel"/>
    <property type="match status" value="1"/>
</dbReference>
<dbReference type="PROSITE" id="PS01327">
    <property type="entry name" value="MSCL"/>
    <property type="match status" value="1"/>
</dbReference>
<name>MSCL_PROA2</name>
<protein>
    <recommendedName>
        <fullName evidence="1">Large-conductance mechanosensitive channel</fullName>
    </recommendedName>
</protein>
<reference key="1">
    <citation type="submission" date="2008-06" db="EMBL/GenBank/DDBJ databases">
        <title>Complete sequence of chromosome of Prosthecochloris aestuarii DSM 271.</title>
        <authorList>
            <consortium name="US DOE Joint Genome Institute"/>
            <person name="Lucas S."/>
            <person name="Copeland A."/>
            <person name="Lapidus A."/>
            <person name="Glavina del Rio T."/>
            <person name="Dalin E."/>
            <person name="Tice H."/>
            <person name="Bruce D."/>
            <person name="Goodwin L."/>
            <person name="Pitluck S."/>
            <person name="Schmutz J."/>
            <person name="Larimer F."/>
            <person name="Land M."/>
            <person name="Hauser L."/>
            <person name="Kyrpides N."/>
            <person name="Anderson I."/>
            <person name="Liu Z."/>
            <person name="Li T."/>
            <person name="Zhao F."/>
            <person name="Overmann J."/>
            <person name="Bryant D.A."/>
            <person name="Richardson P."/>
        </authorList>
    </citation>
    <scope>NUCLEOTIDE SEQUENCE [LARGE SCALE GENOMIC DNA]</scope>
    <source>
        <strain>DSM 271 / SK 413</strain>
    </source>
</reference>